<organism>
    <name type="scientific">Methanothrix soehngenii</name>
    <name type="common">Methanosaeta concilii</name>
    <dbReference type="NCBI Taxonomy" id="2223"/>
    <lineage>
        <taxon>Archaea</taxon>
        <taxon>Methanobacteriati</taxon>
        <taxon>Methanobacteriota</taxon>
        <taxon>Stenosarchaea group</taxon>
        <taxon>Methanomicrobia</taxon>
        <taxon>Methanotrichales</taxon>
        <taxon>Methanotrichaceae</taxon>
        <taxon>Methanothrix</taxon>
    </lineage>
</organism>
<protein>
    <recommendedName>
        <fullName>Uncharacterized 16.9 kDa protein in acs 3'region</fullName>
    </recommendedName>
    <alternativeName>
        <fullName>ORF1</fullName>
    </alternativeName>
</protein>
<name>YAC1_METSH</name>
<sequence>MAALGWLPGIRIDQAESWEDVGIIKEAVNLAEEKATAKTSVLLEETRIFEAPKDLAENSNVMKWMKEKGFKTEREMRLWCSANYIQFWGEMAKTYADWFEPWSSTLEWKPPYAKWFVGGKCNVTHNCVDRHAQGAKKIRWPYIRA</sequence>
<reference key="1">
    <citation type="journal article" date="1991" name="J. Bacteriol.">
        <title>Cloning, sequence analysis, and functional expression of the acetyl coenzyme A synthetase gene from Methanothrix soehngenii in Escherichia coli.</title>
        <authorList>
            <person name="Eggen R.I.L."/>
            <person name="Geerling A.C.M."/>
            <person name="Boshoven A.B.P."/>
            <person name="de Vos W.M."/>
        </authorList>
    </citation>
    <scope>NUCLEOTIDE SEQUENCE [GENOMIC DNA]</scope>
    <source>
        <strain>Opfikon / DSM 2139</strain>
    </source>
</reference>
<feature type="chain" id="PRO_0000066105" description="Uncharacterized 16.9 kDa protein in acs 3'region">
    <location>
        <begin position="1"/>
        <end position="145"/>
    </location>
</feature>
<proteinExistence type="predicted"/>
<accession>P27096</accession>
<dbReference type="EMBL" id="M63968">
    <property type="protein sequence ID" value="AAA73008.1"/>
    <property type="molecule type" value="Genomic_DNA"/>
</dbReference>
<dbReference type="PIR" id="B41043">
    <property type="entry name" value="B41043"/>
</dbReference>
<dbReference type="SMR" id="P27096"/>
<dbReference type="Gene3D" id="3.40.50.12780">
    <property type="entry name" value="N-terminal domain of ligase-like"/>
    <property type="match status" value="1"/>
</dbReference>
<dbReference type="InterPro" id="IPR032387">
    <property type="entry name" value="ACAS_N"/>
</dbReference>
<dbReference type="InterPro" id="IPR042099">
    <property type="entry name" value="ANL_N_sf"/>
</dbReference>
<dbReference type="Pfam" id="PF16177">
    <property type="entry name" value="ACAS_N"/>
    <property type="match status" value="1"/>
</dbReference>